<protein>
    <recommendedName>
        <fullName evidence="1">DNA mismatch repair protein MutS</fullName>
    </recommendedName>
</protein>
<dbReference type="EMBL" id="AM884177">
    <property type="protein sequence ID" value="CAP06559.1"/>
    <property type="molecule type" value="Genomic_DNA"/>
</dbReference>
<dbReference type="RefSeq" id="WP_009873407.1">
    <property type="nucleotide sequence ID" value="NC_010280.2"/>
</dbReference>
<dbReference type="SMR" id="B0BAP7"/>
<dbReference type="KEGG" id="ctl:CTLon_0161"/>
<dbReference type="HOGENOM" id="CLU_002472_4_0_0"/>
<dbReference type="Proteomes" id="UP001154401">
    <property type="component" value="Chromosome"/>
</dbReference>
<dbReference type="GO" id="GO:0005829">
    <property type="term" value="C:cytosol"/>
    <property type="evidence" value="ECO:0007669"/>
    <property type="project" value="TreeGrafter"/>
</dbReference>
<dbReference type="GO" id="GO:0005524">
    <property type="term" value="F:ATP binding"/>
    <property type="evidence" value="ECO:0007669"/>
    <property type="project" value="UniProtKB-UniRule"/>
</dbReference>
<dbReference type="GO" id="GO:0140664">
    <property type="term" value="F:ATP-dependent DNA damage sensor activity"/>
    <property type="evidence" value="ECO:0007669"/>
    <property type="project" value="InterPro"/>
</dbReference>
<dbReference type="GO" id="GO:0003684">
    <property type="term" value="F:damaged DNA binding"/>
    <property type="evidence" value="ECO:0007669"/>
    <property type="project" value="UniProtKB-UniRule"/>
</dbReference>
<dbReference type="GO" id="GO:0030983">
    <property type="term" value="F:mismatched DNA binding"/>
    <property type="evidence" value="ECO:0007669"/>
    <property type="project" value="InterPro"/>
</dbReference>
<dbReference type="GO" id="GO:0006298">
    <property type="term" value="P:mismatch repair"/>
    <property type="evidence" value="ECO:0007669"/>
    <property type="project" value="UniProtKB-UniRule"/>
</dbReference>
<dbReference type="CDD" id="cd03284">
    <property type="entry name" value="ABC_MutS1"/>
    <property type="match status" value="1"/>
</dbReference>
<dbReference type="FunFam" id="3.30.420.110:FF:000030">
    <property type="entry name" value="DNA mismatch repair protein MutS"/>
    <property type="match status" value="1"/>
</dbReference>
<dbReference type="FunFam" id="3.40.1170.10:FF:000016">
    <property type="entry name" value="DNA mismatch repair protein MutS"/>
    <property type="match status" value="1"/>
</dbReference>
<dbReference type="FunFam" id="3.40.50.300:FF:002842">
    <property type="entry name" value="DNA mismatch repair protein MutS"/>
    <property type="match status" value="1"/>
</dbReference>
<dbReference type="Gene3D" id="1.10.1420.10">
    <property type="match status" value="2"/>
</dbReference>
<dbReference type="Gene3D" id="3.40.1170.10">
    <property type="entry name" value="DNA repair protein MutS, domain I"/>
    <property type="match status" value="1"/>
</dbReference>
<dbReference type="Gene3D" id="3.30.420.110">
    <property type="entry name" value="MutS, connector domain"/>
    <property type="match status" value="1"/>
</dbReference>
<dbReference type="Gene3D" id="3.40.50.300">
    <property type="entry name" value="P-loop containing nucleotide triphosphate hydrolases"/>
    <property type="match status" value="1"/>
</dbReference>
<dbReference type="HAMAP" id="MF_00096">
    <property type="entry name" value="MutS"/>
    <property type="match status" value="1"/>
</dbReference>
<dbReference type="InterPro" id="IPR005748">
    <property type="entry name" value="DNA_mismatch_repair_MutS"/>
</dbReference>
<dbReference type="InterPro" id="IPR007695">
    <property type="entry name" value="DNA_mismatch_repair_MutS-lik_N"/>
</dbReference>
<dbReference type="InterPro" id="IPR017261">
    <property type="entry name" value="DNA_mismatch_repair_MutS/MSH"/>
</dbReference>
<dbReference type="InterPro" id="IPR000432">
    <property type="entry name" value="DNA_mismatch_repair_MutS_C"/>
</dbReference>
<dbReference type="InterPro" id="IPR007861">
    <property type="entry name" value="DNA_mismatch_repair_MutS_clamp"/>
</dbReference>
<dbReference type="InterPro" id="IPR007696">
    <property type="entry name" value="DNA_mismatch_repair_MutS_core"/>
</dbReference>
<dbReference type="InterPro" id="IPR016151">
    <property type="entry name" value="DNA_mismatch_repair_MutS_N"/>
</dbReference>
<dbReference type="InterPro" id="IPR036187">
    <property type="entry name" value="DNA_mismatch_repair_MutS_sf"/>
</dbReference>
<dbReference type="InterPro" id="IPR007860">
    <property type="entry name" value="DNA_mmatch_repair_MutS_con_dom"/>
</dbReference>
<dbReference type="InterPro" id="IPR045076">
    <property type="entry name" value="MutS"/>
</dbReference>
<dbReference type="InterPro" id="IPR036678">
    <property type="entry name" value="MutS_con_dom_sf"/>
</dbReference>
<dbReference type="InterPro" id="IPR027417">
    <property type="entry name" value="P-loop_NTPase"/>
</dbReference>
<dbReference type="NCBIfam" id="TIGR01070">
    <property type="entry name" value="mutS1"/>
    <property type="match status" value="1"/>
</dbReference>
<dbReference type="NCBIfam" id="NF003810">
    <property type="entry name" value="PRK05399.1"/>
    <property type="match status" value="1"/>
</dbReference>
<dbReference type="PANTHER" id="PTHR11361:SF34">
    <property type="entry name" value="DNA MISMATCH REPAIR PROTEIN MSH1, MITOCHONDRIAL"/>
    <property type="match status" value="1"/>
</dbReference>
<dbReference type="PANTHER" id="PTHR11361">
    <property type="entry name" value="DNA MISMATCH REPAIR PROTEIN MUTS FAMILY MEMBER"/>
    <property type="match status" value="1"/>
</dbReference>
<dbReference type="Pfam" id="PF01624">
    <property type="entry name" value="MutS_I"/>
    <property type="match status" value="1"/>
</dbReference>
<dbReference type="Pfam" id="PF05188">
    <property type="entry name" value="MutS_II"/>
    <property type="match status" value="1"/>
</dbReference>
<dbReference type="Pfam" id="PF05192">
    <property type="entry name" value="MutS_III"/>
    <property type="match status" value="1"/>
</dbReference>
<dbReference type="Pfam" id="PF05190">
    <property type="entry name" value="MutS_IV"/>
    <property type="match status" value="1"/>
</dbReference>
<dbReference type="Pfam" id="PF00488">
    <property type="entry name" value="MutS_V"/>
    <property type="match status" value="1"/>
</dbReference>
<dbReference type="PIRSF" id="PIRSF037677">
    <property type="entry name" value="DNA_mis_repair_Msh6"/>
    <property type="match status" value="1"/>
</dbReference>
<dbReference type="SMART" id="SM00534">
    <property type="entry name" value="MUTSac"/>
    <property type="match status" value="1"/>
</dbReference>
<dbReference type="SMART" id="SM00533">
    <property type="entry name" value="MUTSd"/>
    <property type="match status" value="1"/>
</dbReference>
<dbReference type="SUPFAM" id="SSF55271">
    <property type="entry name" value="DNA repair protein MutS, domain I"/>
    <property type="match status" value="1"/>
</dbReference>
<dbReference type="SUPFAM" id="SSF53150">
    <property type="entry name" value="DNA repair protein MutS, domain II"/>
    <property type="match status" value="1"/>
</dbReference>
<dbReference type="SUPFAM" id="SSF48334">
    <property type="entry name" value="DNA repair protein MutS, domain III"/>
    <property type="match status" value="1"/>
</dbReference>
<dbReference type="SUPFAM" id="SSF52540">
    <property type="entry name" value="P-loop containing nucleoside triphosphate hydrolases"/>
    <property type="match status" value="1"/>
</dbReference>
<dbReference type="PROSITE" id="PS00486">
    <property type="entry name" value="DNA_MISMATCH_REPAIR_2"/>
    <property type="match status" value="1"/>
</dbReference>
<organism>
    <name type="scientific">Chlamydia trachomatis serovar L2b (strain UCH-1/proctitis)</name>
    <dbReference type="NCBI Taxonomy" id="471473"/>
    <lineage>
        <taxon>Bacteria</taxon>
        <taxon>Pseudomonadati</taxon>
        <taxon>Chlamydiota</taxon>
        <taxon>Chlamydiia</taxon>
        <taxon>Chlamydiales</taxon>
        <taxon>Chlamydiaceae</taxon>
        <taxon>Chlamydia/Chlamydophila group</taxon>
        <taxon>Chlamydia</taxon>
    </lineage>
</organism>
<reference key="1">
    <citation type="journal article" date="2008" name="Genome Res.">
        <title>Chlamydia trachomatis: genome sequence analysis of lymphogranuloma venereum isolates.</title>
        <authorList>
            <person name="Thomson N.R."/>
            <person name="Holden M.T.G."/>
            <person name="Carder C."/>
            <person name="Lennard N."/>
            <person name="Lockey S.J."/>
            <person name="Marsh P."/>
            <person name="Skipp P."/>
            <person name="O'Connor C.D."/>
            <person name="Goodhead I."/>
            <person name="Norbertzcak H."/>
            <person name="Harris B."/>
            <person name="Ormond D."/>
            <person name="Rance R."/>
            <person name="Quail M.A."/>
            <person name="Parkhill J."/>
            <person name="Stephens R.S."/>
            <person name="Clarke I.N."/>
        </authorList>
    </citation>
    <scope>NUCLEOTIDE SEQUENCE [LARGE SCALE GENOMIC DNA]</scope>
    <source>
        <strain>UCH-1/proctitis</strain>
    </source>
</reference>
<keyword id="KW-0067">ATP-binding</keyword>
<keyword id="KW-0227">DNA damage</keyword>
<keyword id="KW-0234">DNA repair</keyword>
<keyword id="KW-0238">DNA-binding</keyword>
<keyword id="KW-0547">Nucleotide-binding</keyword>
<comment type="function">
    <text evidence="1">This protein is involved in the repair of mismatches in DNA. It is possible that it carries out the mismatch recognition step. This protein has a weak ATPase activity.</text>
</comment>
<comment type="similarity">
    <text evidence="1">Belongs to the DNA mismatch repair MutS family.</text>
</comment>
<accession>B0BAP7</accession>
<evidence type="ECO:0000255" key="1">
    <source>
        <dbReference type="HAMAP-Rule" id="MF_00096"/>
    </source>
</evidence>
<feature type="chain" id="PRO_1000093617" description="DNA mismatch repair protein MutS">
    <location>
        <begin position="1"/>
        <end position="820"/>
    </location>
</feature>
<feature type="binding site" evidence="1">
    <location>
        <begin position="618"/>
        <end position="625"/>
    </location>
    <ligand>
        <name>ATP</name>
        <dbReference type="ChEBI" id="CHEBI:30616"/>
    </ligand>
</feature>
<sequence>MTHKLTPMMQQWHQCKEQAGDCLLLFRLGEFYEAFFDDALILAQNLDITLTQRQNVPMSGIPATCLDGYVDRLVSRGFKVAIAEQADNTEGSKGLVPRTINRLITPGALLSSSLLPEKANNYVLAINQVGSLYGLSCLDLSIGTFLVAEYDNTKDLIEAICRLAPTELLSHAKFYQKNAAVIKQLQQHLRITLSEYVSWAFEYQSATKKLYTCFQVSSLDGFGLQGLVPAINAAGALLSYIQDKLLLPISHLSIPKIYGQQKHLLIDKASQTNLELLSPIHGEHGKGSLLQVMERTSTPMGGRLLRNTLINPFYDLKEITLRQDSVEFFLQQEDLRKILKRQLSCVRDLERLATKISTSLATPKDIGTLRDSLLSCTHIADNLQNCALPEFLENKFLIAPPLCSLIKTLSTELIQELPLKVSEGNIFANHYHPDLLRLRNIKENSKSWILEYQERIRNETGIKKLKVCYAQALGYYIEVASNLAPQLPKEFIRRQSRLHAERFTTQELQQFQDEVFSVEDKLQTLETKLFKELCFYIVEHRDLILKLSTAVADLDYVVSLAELAAEYDYRRPLVDHSDALSITKGMHPVALTLLDKGTFIPNDTVMHSAQTRMILLTGPNMAGKSTYIRQIALLVIMAQMGSFIPARSAHIGIVDKIFTRIGAGDNLSKGMSTFMVEMAETANILHNATDRSLVILDEIGRGTSTYDGLAIAQAVVEFLLFTDGKKAKTLFATHYKELTELEMHCQHVENFHAMVKENSGQPIFMYEIVKGHSKKSFGIHVAKLAGFPLSVVSRAQQILHQFEGPDLRPEPEKAQQLVMF</sequence>
<gene>
    <name evidence="1" type="primary">mutS</name>
    <name type="ordered locus">CTLon_0161</name>
</gene>
<name>MUTS_CHLTB</name>
<proteinExistence type="inferred from homology"/>